<organism>
    <name type="scientific">Streptococcus pyogenes serotype M5 (strain Manfredo)</name>
    <dbReference type="NCBI Taxonomy" id="160491"/>
    <lineage>
        <taxon>Bacteria</taxon>
        <taxon>Bacillati</taxon>
        <taxon>Bacillota</taxon>
        <taxon>Bacilli</taxon>
        <taxon>Lactobacillales</taxon>
        <taxon>Streptococcaceae</taxon>
        <taxon>Streptococcus</taxon>
    </lineage>
</organism>
<evidence type="ECO:0000255" key="1">
    <source>
        <dbReference type="HAMAP-Rule" id="MF_00358"/>
    </source>
</evidence>
<evidence type="ECO:0000256" key="2">
    <source>
        <dbReference type="SAM" id="MobiDB-lite"/>
    </source>
</evidence>
<evidence type="ECO:0000305" key="3"/>
<name>RS21_STRPG</name>
<accession>A2RFA6</accession>
<protein>
    <recommendedName>
        <fullName evidence="1">Small ribosomal subunit protein bS21</fullName>
    </recommendedName>
    <alternativeName>
        <fullName evidence="3">30S ribosomal protein S21</fullName>
    </alternativeName>
</protein>
<keyword id="KW-0687">Ribonucleoprotein</keyword>
<keyword id="KW-0689">Ribosomal protein</keyword>
<sequence length="58" mass="6972">MSKTVVRKNESLDDALRRFKRSVTKAGTLQESRKREFYEKPSVKRKRKSEAARKRKKF</sequence>
<dbReference type="EMBL" id="AM295007">
    <property type="protein sequence ID" value="CAM30535.1"/>
    <property type="molecule type" value="Genomic_DNA"/>
</dbReference>
<dbReference type="RefSeq" id="WP_000048058.1">
    <property type="nucleotide sequence ID" value="NC_009332.1"/>
</dbReference>
<dbReference type="SMR" id="A2RFA6"/>
<dbReference type="GeneID" id="93936799"/>
<dbReference type="KEGG" id="spf:SpyM51210"/>
<dbReference type="HOGENOM" id="CLU_159258_3_2_9"/>
<dbReference type="GO" id="GO:1990904">
    <property type="term" value="C:ribonucleoprotein complex"/>
    <property type="evidence" value="ECO:0007669"/>
    <property type="project" value="UniProtKB-KW"/>
</dbReference>
<dbReference type="GO" id="GO:0005840">
    <property type="term" value="C:ribosome"/>
    <property type="evidence" value="ECO:0007669"/>
    <property type="project" value="UniProtKB-KW"/>
</dbReference>
<dbReference type="GO" id="GO:0003735">
    <property type="term" value="F:structural constituent of ribosome"/>
    <property type="evidence" value="ECO:0007669"/>
    <property type="project" value="InterPro"/>
</dbReference>
<dbReference type="GO" id="GO:0006412">
    <property type="term" value="P:translation"/>
    <property type="evidence" value="ECO:0007669"/>
    <property type="project" value="UniProtKB-UniRule"/>
</dbReference>
<dbReference type="Gene3D" id="1.20.5.1150">
    <property type="entry name" value="Ribosomal protein S8"/>
    <property type="match status" value="1"/>
</dbReference>
<dbReference type="HAMAP" id="MF_00358">
    <property type="entry name" value="Ribosomal_bS21"/>
    <property type="match status" value="1"/>
</dbReference>
<dbReference type="InterPro" id="IPR001911">
    <property type="entry name" value="Ribosomal_bS21"/>
</dbReference>
<dbReference type="InterPro" id="IPR018278">
    <property type="entry name" value="Ribosomal_bS21_CS"/>
</dbReference>
<dbReference type="InterPro" id="IPR038380">
    <property type="entry name" value="Ribosomal_bS21_sf"/>
</dbReference>
<dbReference type="NCBIfam" id="TIGR00030">
    <property type="entry name" value="S21p"/>
    <property type="match status" value="1"/>
</dbReference>
<dbReference type="PANTHER" id="PTHR21109">
    <property type="entry name" value="MITOCHONDRIAL 28S RIBOSOMAL PROTEIN S21"/>
    <property type="match status" value="1"/>
</dbReference>
<dbReference type="PANTHER" id="PTHR21109:SF22">
    <property type="entry name" value="SMALL RIBOSOMAL SUBUNIT PROTEIN BS21"/>
    <property type="match status" value="1"/>
</dbReference>
<dbReference type="Pfam" id="PF01165">
    <property type="entry name" value="Ribosomal_S21"/>
    <property type="match status" value="1"/>
</dbReference>
<dbReference type="PRINTS" id="PR00976">
    <property type="entry name" value="RIBOSOMALS21"/>
</dbReference>
<dbReference type="PROSITE" id="PS01181">
    <property type="entry name" value="RIBOSOMAL_S21"/>
    <property type="match status" value="1"/>
</dbReference>
<proteinExistence type="inferred from homology"/>
<comment type="similarity">
    <text evidence="1">Belongs to the bacterial ribosomal protein bS21 family.</text>
</comment>
<reference key="1">
    <citation type="journal article" date="2007" name="J. Bacteriol.">
        <title>Complete genome of acute rheumatic fever-associated serotype M5 Streptococcus pyogenes strain Manfredo.</title>
        <authorList>
            <person name="Holden M.T.G."/>
            <person name="Scott A."/>
            <person name="Cherevach I."/>
            <person name="Chillingworth T."/>
            <person name="Churcher C."/>
            <person name="Cronin A."/>
            <person name="Dowd L."/>
            <person name="Feltwell T."/>
            <person name="Hamlin N."/>
            <person name="Holroyd S."/>
            <person name="Jagels K."/>
            <person name="Moule S."/>
            <person name="Mungall K."/>
            <person name="Quail M.A."/>
            <person name="Price C."/>
            <person name="Rabbinowitsch E."/>
            <person name="Sharp S."/>
            <person name="Skelton J."/>
            <person name="Whitehead S."/>
            <person name="Barrell B.G."/>
            <person name="Kehoe M."/>
            <person name="Parkhill J."/>
        </authorList>
    </citation>
    <scope>NUCLEOTIDE SEQUENCE [LARGE SCALE GENOMIC DNA]</scope>
    <source>
        <strain>Manfredo</strain>
    </source>
</reference>
<gene>
    <name evidence="1" type="primary">rpsU</name>
    <name type="ordered locus">SpyM51210</name>
</gene>
<feature type="chain" id="PRO_1000005178" description="Small ribosomal subunit protein bS21">
    <location>
        <begin position="1"/>
        <end position="58"/>
    </location>
</feature>
<feature type="region of interest" description="Disordered" evidence="2">
    <location>
        <begin position="36"/>
        <end position="58"/>
    </location>
</feature>
<feature type="compositionally biased region" description="Basic residues" evidence="2">
    <location>
        <begin position="43"/>
        <end position="58"/>
    </location>
</feature>